<evidence type="ECO:0000255" key="1">
    <source>
        <dbReference type="HAMAP-Rule" id="MF_00074"/>
    </source>
</evidence>
<comment type="function">
    <text evidence="1">Specifically methylates the N7 position of guanine in position 527 of 16S rRNA.</text>
</comment>
<comment type="catalytic activity">
    <reaction evidence="1">
        <text>guanosine(527) in 16S rRNA + S-adenosyl-L-methionine = N(7)-methylguanosine(527) in 16S rRNA + S-adenosyl-L-homocysteine</text>
        <dbReference type="Rhea" id="RHEA:42732"/>
        <dbReference type="Rhea" id="RHEA-COMP:10209"/>
        <dbReference type="Rhea" id="RHEA-COMP:10210"/>
        <dbReference type="ChEBI" id="CHEBI:57856"/>
        <dbReference type="ChEBI" id="CHEBI:59789"/>
        <dbReference type="ChEBI" id="CHEBI:74269"/>
        <dbReference type="ChEBI" id="CHEBI:74480"/>
        <dbReference type="EC" id="2.1.1.170"/>
    </reaction>
</comment>
<comment type="subcellular location">
    <subcellularLocation>
        <location evidence="1">Cytoplasm</location>
    </subcellularLocation>
</comment>
<comment type="similarity">
    <text evidence="1">Belongs to the methyltransferase superfamily. RNA methyltransferase RsmG family.</text>
</comment>
<gene>
    <name evidence="1" type="primary">rsmG</name>
    <name type="ordered locus">Shal_4304</name>
</gene>
<accession>B0TQG4</accession>
<reference key="1">
    <citation type="submission" date="2008-01" db="EMBL/GenBank/DDBJ databases">
        <title>Complete sequence of Shewanella halifaxensis HAW-EB4.</title>
        <authorList>
            <consortium name="US DOE Joint Genome Institute"/>
            <person name="Copeland A."/>
            <person name="Lucas S."/>
            <person name="Lapidus A."/>
            <person name="Glavina del Rio T."/>
            <person name="Dalin E."/>
            <person name="Tice H."/>
            <person name="Bruce D."/>
            <person name="Goodwin L."/>
            <person name="Pitluck S."/>
            <person name="Sims D."/>
            <person name="Brettin T."/>
            <person name="Detter J.C."/>
            <person name="Han C."/>
            <person name="Kuske C.R."/>
            <person name="Schmutz J."/>
            <person name="Larimer F."/>
            <person name="Land M."/>
            <person name="Hauser L."/>
            <person name="Kyrpides N."/>
            <person name="Kim E."/>
            <person name="Zhao J.-S."/>
            <person name="Richardson P."/>
        </authorList>
    </citation>
    <scope>NUCLEOTIDE SEQUENCE [LARGE SCALE GENOMIC DNA]</scope>
    <source>
        <strain>HAW-EB4</strain>
    </source>
</reference>
<keyword id="KW-0963">Cytoplasm</keyword>
<keyword id="KW-0489">Methyltransferase</keyword>
<keyword id="KW-0698">rRNA processing</keyword>
<keyword id="KW-0949">S-adenosyl-L-methionine</keyword>
<keyword id="KW-0808">Transferase</keyword>
<name>RSMG_SHEHH</name>
<proteinExistence type="inferred from homology"/>
<feature type="chain" id="PRO_1000075232" description="Ribosomal RNA small subunit methyltransferase G">
    <location>
        <begin position="1"/>
        <end position="207"/>
    </location>
</feature>
<feature type="binding site" evidence="1">
    <location>
        <position position="74"/>
    </location>
    <ligand>
        <name>S-adenosyl-L-methionine</name>
        <dbReference type="ChEBI" id="CHEBI:59789"/>
    </ligand>
</feature>
<feature type="binding site" evidence="1">
    <location>
        <position position="79"/>
    </location>
    <ligand>
        <name>S-adenosyl-L-methionine</name>
        <dbReference type="ChEBI" id="CHEBI:59789"/>
    </ligand>
</feature>
<feature type="binding site" evidence="1">
    <location>
        <begin position="125"/>
        <end position="126"/>
    </location>
    <ligand>
        <name>S-adenosyl-L-methionine</name>
        <dbReference type="ChEBI" id="CHEBI:59789"/>
    </ligand>
</feature>
<feature type="binding site" evidence="1">
    <location>
        <position position="140"/>
    </location>
    <ligand>
        <name>S-adenosyl-L-methionine</name>
        <dbReference type="ChEBI" id="CHEBI:59789"/>
    </ligand>
</feature>
<dbReference type="EC" id="2.1.1.170" evidence="1"/>
<dbReference type="EMBL" id="CP000931">
    <property type="protein sequence ID" value="ABZ78844.1"/>
    <property type="molecule type" value="Genomic_DNA"/>
</dbReference>
<dbReference type="RefSeq" id="WP_012279347.1">
    <property type="nucleotide sequence ID" value="NC_010334.1"/>
</dbReference>
<dbReference type="SMR" id="B0TQG4"/>
<dbReference type="STRING" id="458817.Shal_4304"/>
<dbReference type="KEGG" id="shl:Shal_4304"/>
<dbReference type="eggNOG" id="COG0357">
    <property type="taxonomic scope" value="Bacteria"/>
</dbReference>
<dbReference type="HOGENOM" id="CLU_065341_2_0_6"/>
<dbReference type="OrthoDB" id="9808773at2"/>
<dbReference type="Proteomes" id="UP000001317">
    <property type="component" value="Chromosome"/>
</dbReference>
<dbReference type="GO" id="GO:0005829">
    <property type="term" value="C:cytosol"/>
    <property type="evidence" value="ECO:0007669"/>
    <property type="project" value="TreeGrafter"/>
</dbReference>
<dbReference type="GO" id="GO:0070043">
    <property type="term" value="F:rRNA (guanine-N7-)-methyltransferase activity"/>
    <property type="evidence" value="ECO:0007669"/>
    <property type="project" value="UniProtKB-UniRule"/>
</dbReference>
<dbReference type="CDD" id="cd02440">
    <property type="entry name" value="AdoMet_MTases"/>
    <property type="match status" value="1"/>
</dbReference>
<dbReference type="FunFam" id="3.40.50.150:FF:000032">
    <property type="entry name" value="Ribosomal RNA small subunit methyltransferase G"/>
    <property type="match status" value="1"/>
</dbReference>
<dbReference type="Gene3D" id="3.40.50.150">
    <property type="entry name" value="Vaccinia Virus protein VP39"/>
    <property type="match status" value="1"/>
</dbReference>
<dbReference type="HAMAP" id="MF_00074">
    <property type="entry name" value="16SrRNA_methyltr_G"/>
    <property type="match status" value="1"/>
</dbReference>
<dbReference type="InterPro" id="IPR003682">
    <property type="entry name" value="rRNA_ssu_MeTfrase_G"/>
</dbReference>
<dbReference type="InterPro" id="IPR029063">
    <property type="entry name" value="SAM-dependent_MTases_sf"/>
</dbReference>
<dbReference type="NCBIfam" id="TIGR00138">
    <property type="entry name" value="rsmG_gidB"/>
    <property type="match status" value="1"/>
</dbReference>
<dbReference type="PANTHER" id="PTHR31760">
    <property type="entry name" value="S-ADENOSYL-L-METHIONINE-DEPENDENT METHYLTRANSFERASES SUPERFAMILY PROTEIN"/>
    <property type="match status" value="1"/>
</dbReference>
<dbReference type="PANTHER" id="PTHR31760:SF0">
    <property type="entry name" value="S-ADENOSYL-L-METHIONINE-DEPENDENT METHYLTRANSFERASES SUPERFAMILY PROTEIN"/>
    <property type="match status" value="1"/>
</dbReference>
<dbReference type="Pfam" id="PF02527">
    <property type="entry name" value="GidB"/>
    <property type="match status" value="1"/>
</dbReference>
<dbReference type="PIRSF" id="PIRSF003078">
    <property type="entry name" value="GidB"/>
    <property type="match status" value="1"/>
</dbReference>
<dbReference type="SUPFAM" id="SSF53335">
    <property type="entry name" value="S-adenosyl-L-methionine-dependent methyltransferases"/>
    <property type="match status" value="1"/>
</dbReference>
<protein>
    <recommendedName>
        <fullName evidence="1">Ribosomal RNA small subunit methyltransferase G</fullName>
        <ecNumber evidence="1">2.1.1.170</ecNumber>
    </recommendedName>
    <alternativeName>
        <fullName evidence="1">16S rRNA 7-methylguanosine methyltransferase</fullName>
        <shortName evidence="1">16S rRNA m7G methyltransferase</shortName>
    </alternativeName>
</protein>
<sequence>MLSAQLNDYLAEVGLTATEQQKKQLVDFVGMLNKWNKAFNLTSVRDPEQMLIRHIMDSLVVSPHLKGSRFIDVGTGPGLPGIPLAILNPDKEFVLLDSLGKRIRFQKQVQFELGINNISSIESRVEAYQPEELFDGVLSRAFASIQDMLHWCHHLPKADGCFYALKGQLSEDEMAQLPAGFVVTDIFELKVPKLDEQRHLLRVIKQD</sequence>
<organism>
    <name type="scientific">Shewanella halifaxensis (strain HAW-EB4)</name>
    <dbReference type="NCBI Taxonomy" id="458817"/>
    <lineage>
        <taxon>Bacteria</taxon>
        <taxon>Pseudomonadati</taxon>
        <taxon>Pseudomonadota</taxon>
        <taxon>Gammaproteobacteria</taxon>
        <taxon>Alteromonadales</taxon>
        <taxon>Shewanellaceae</taxon>
        <taxon>Shewanella</taxon>
    </lineage>
</organism>